<evidence type="ECO:0000255" key="1">
    <source>
        <dbReference type="HAMAP-Rule" id="MF_01148"/>
    </source>
</evidence>
<name>LNT_VIBCH</name>
<protein>
    <recommendedName>
        <fullName evidence="1">Apolipoprotein N-acyltransferase</fullName>
        <shortName evidence="1">ALP N-acyltransferase</shortName>
        <ecNumber evidence="1">2.3.1.269</ecNumber>
    </recommendedName>
</protein>
<keyword id="KW-0012">Acyltransferase</keyword>
<keyword id="KW-0997">Cell inner membrane</keyword>
<keyword id="KW-1003">Cell membrane</keyword>
<keyword id="KW-0472">Membrane</keyword>
<keyword id="KW-1185">Reference proteome</keyword>
<keyword id="KW-0808">Transferase</keyword>
<keyword id="KW-0812">Transmembrane</keyword>
<keyword id="KW-1133">Transmembrane helix</keyword>
<accession>Q9KTE4</accession>
<proteinExistence type="inferred from homology"/>
<gene>
    <name evidence="1" type="primary">lnt</name>
    <name type="ordered locus">VC_0958</name>
</gene>
<feature type="chain" id="PRO_0000178107" description="Apolipoprotein N-acyltransferase">
    <location>
        <begin position="1"/>
        <end position="505"/>
    </location>
</feature>
<feature type="transmembrane region" description="Helical" evidence="1">
    <location>
        <begin position="15"/>
        <end position="46"/>
    </location>
</feature>
<feature type="transmembrane region" description="Helical" evidence="1">
    <location>
        <begin position="55"/>
        <end position="75"/>
    </location>
</feature>
<feature type="transmembrane region" description="Helical" evidence="1">
    <location>
        <begin position="89"/>
        <end position="109"/>
    </location>
</feature>
<feature type="transmembrane region" description="Helical" evidence="1">
    <location>
        <begin position="129"/>
        <end position="149"/>
    </location>
</feature>
<feature type="transmembrane region" description="Helical" evidence="1">
    <location>
        <begin position="161"/>
        <end position="181"/>
    </location>
</feature>
<feature type="transmembrane region" description="Helical" evidence="1">
    <location>
        <begin position="192"/>
        <end position="212"/>
    </location>
</feature>
<feature type="transmembrane region" description="Helical" evidence="1">
    <location>
        <begin position="479"/>
        <end position="499"/>
    </location>
</feature>
<feature type="domain" description="CN hydrolase" evidence="1">
    <location>
        <begin position="225"/>
        <end position="471"/>
    </location>
</feature>
<feature type="active site" description="Proton acceptor" evidence="1">
    <location>
        <position position="264"/>
    </location>
</feature>
<feature type="active site" evidence="1">
    <location>
        <position position="330"/>
    </location>
</feature>
<feature type="active site" description="Nucleophile" evidence="1">
    <location>
        <position position="382"/>
    </location>
</feature>
<reference key="1">
    <citation type="journal article" date="2000" name="Nature">
        <title>DNA sequence of both chromosomes of the cholera pathogen Vibrio cholerae.</title>
        <authorList>
            <person name="Heidelberg J.F."/>
            <person name="Eisen J.A."/>
            <person name="Nelson W.C."/>
            <person name="Clayton R.A."/>
            <person name="Gwinn M.L."/>
            <person name="Dodson R.J."/>
            <person name="Haft D.H."/>
            <person name="Hickey E.K."/>
            <person name="Peterson J.D."/>
            <person name="Umayam L.A."/>
            <person name="Gill S.R."/>
            <person name="Nelson K.E."/>
            <person name="Read T.D."/>
            <person name="Tettelin H."/>
            <person name="Richardson D.L."/>
            <person name="Ermolaeva M.D."/>
            <person name="Vamathevan J.J."/>
            <person name="Bass S."/>
            <person name="Qin H."/>
            <person name="Dragoi I."/>
            <person name="Sellers P."/>
            <person name="McDonald L.A."/>
            <person name="Utterback T.R."/>
            <person name="Fleischmann R.D."/>
            <person name="Nierman W.C."/>
            <person name="White O."/>
            <person name="Salzberg S.L."/>
            <person name="Smith H.O."/>
            <person name="Colwell R.R."/>
            <person name="Mekalanos J.J."/>
            <person name="Venter J.C."/>
            <person name="Fraser C.M."/>
        </authorList>
    </citation>
    <scope>NUCLEOTIDE SEQUENCE [LARGE SCALE GENOMIC DNA]</scope>
    <source>
        <strain>ATCC 39315 / El Tor Inaba N16961</strain>
    </source>
</reference>
<sequence length="505" mass="56987">MNSVLSHRLMRPLAAAFVGVITPLAFAPYQFWPLALLSPFILLLLLHQQSAKRAALIAYLWGIGQFAVGISWVHVSIDTFGGMPKIASLFLMTLLVGYLALYPSLFGWLLNRLFPNNSRSKWLCAAPALWLITDWLRGWVMTGFPWLWLGYSQIDSPLANFAPIGGVELITLLLLFCAGSLAYAVLNRRWLMACIPLVVYATGYGLQAMQWVTPQTERTASLALIQGNIEQGLKWLPSQRWPTIMKYTDLTRENWDADVIIWPEAAIPAFEYEISSFLHNLDAAARMNQSAVITGIINQSDDKQYFNSVLTVGDTPHGEYRYDLTQRYHKYHLLPFGEFVPFEEILRPLAPFFNLPMSSFSQGAYVQPNLIAKGFAFVTALCYEIIFNEQVRDNVTPDTDFLLTLSNDAWFGRSIGPLQHMEIARMRALELGKPLIRATNNGVTAVTDERGRIMAQLPQFETGVLKATVTPTRGSTPYFLWGTTPLYLWVGLAAGFAFWRQRRAR</sequence>
<comment type="function">
    <text evidence="1">Catalyzes the phospholipid dependent N-acylation of the N-terminal cysteine of apolipoprotein, the last step in lipoprotein maturation.</text>
</comment>
<comment type="catalytic activity">
    <reaction evidence="1">
        <text>N-terminal S-1,2-diacyl-sn-glyceryl-L-cysteinyl-[lipoprotein] + a glycerophospholipid = N-acyl-S-1,2-diacyl-sn-glyceryl-L-cysteinyl-[lipoprotein] + a 2-acyl-sn-glycero-3-phospholipid + H(+)</text>
        <dbReference type="Rhea" id="RHEA:48228"/>
        <dbReference type="Rhea" id="RHEA-COMP:14681"/>
        <dbReference type="Rhea" id="RHEA-COMP:14684"/>
        <dbReference type="ChEBI" id="CHEBI:15378"/>
        <dbReference type="ChEBI" id="CHEBI:136912"/>
        <dbReference type="ChEBI" id="CHEBI:140656"/>
        <dbReference type="ChEBI" id="CHEBI:140657"/>
        <dbReference type="ChEBI" id="CHEBI:140660"/>
        <dbReference type="EC" id="2.3.1.269"/>
    </reaction>
</comment>
<comment type="pathway">
    <text evidence="1">Protein modification; lipoprotein biosynthesis (N-acyl transfer).</text>
</comment>
<comment type="subcellular location">
    <subcellularLocation>
        <location evidence="1">Cell inner membrane</location>
        <topology evidence="1">Multi-pass membrane protein</topology>
    </subcellularLocation>
</comment>
<comment type="similarity">
    <text evidence="1">Belongs to the CN hydrolase family. Apolipoprotein N-acyltransferase subfamily.</text>
</comment>
<dbReference type="EC" id="2.3.1.269" evidence="1"/>
<dbReference type="EMBL" id="AE003852">
    <property type="protein sequence ID" value="AAF94120.1"/>
    <property type="molecule type" value="Genomic_DNA"/>
</dbReference>
<dbReference type="PIR" id="A82261">
    <property type="entry name" value="A82261"/>
</dbReference>
<dbReference type="RefSeq" id="NP_230605.1">
    <property type="nucleotide sequence ID" value="NC_002505.1"/>
</dbReference>
<dbReference type="RefSeq" id="WP_001089648.1">
    <property type="nucleotide sequence ID" value="NZ_LT906614.1"/>
</dbReference>
<dbReference type="SMR" id="Q9KTE4"/>
<dbReference type="STRING" id="243277.VC_0958"/>
<dbReference type="DNASU" id="2614211"/>
<dbReference type="EnsemblBacteria" id="AAF94120">
    <property type="protein sequence ID" value="AAF94120"/>
    <property type="gene ID" value="VC_0958"/>
</dbReference>
<dbReference type="KEGG" id="vch:VC_0958"/>
<dbReference type="PATRIC" id="fig|243277.26.peg.912"/>
<dbReference type="eggNOG" id="COG0815">
    <property type="taxonomic scope" value="Bacteria"/>
</dbReference>
<dbReference type="HOGENOM" id="CLU_019563_3_0_6"/>
<dbReference type="UniPathway" id="UPA00666"/>
<dbReference type="Proteomes" id="UP000000584">
    <property type="component" value="Chromosome 1"/>
</dbReference>
<dbReference type="GO" id="GO:0005886">
    <property type="term" value="C:plasma membrane"/>
    <property type="evidence" value="ECO:0007669"/>
    <property type="project" value="UniProtKB-SubCell"/>
</dbReference>
<dbReference type="GO" id="GO:0016410">
    <property type="term" value="F:N-acyltransferase activity"/>
    <property type="evidence" value="ECO:0007669"/>
    <property type="project" value="UniProtKB-UniRule"/>
</dbReference>
<dbReference type="GO" id="GO:0042158">
    <property type="term" value="P:lipoprotein biosynthetic process"/>
    <property type="evidence" value="ECO:0007669"/>
    <property type="project" value="UniProtKB-UniRule"/>
</dbReference>
<dbReference type="CDD" id="cd07571">
    <property type="entry name" value="ALP_N-acyl_transferase"/>
    <property type="match status" value="1"/>
</dbReference>
<dbReference type="FunFam" id="3.60.110.10:FF:000015">
    <property type="entry name" value="Apolipoprotein N-acyltransferase"/>
    <property type="match status" value="1"/>
</dbReference>
<dbReference type="Gene3D" id="3.60.110.10">
    <property type="entry name" value="Carbon-nitrogen hydrolase"/>
    <property type="match status" value="1"/>
</dbReference>
<dbReference type="HAMAP" id="MF_01148">
    <property type="entry name" value="Lnt"/>
    <property type="match status" value="1"/>
</dbReference>
<dbReference type="InterPro" id="IPR004563">
    <property type="entry name" value="Apolipo_AcylTrfase"/>
</dbReference>
<dbReference type="InterPro" id="IPR003010">
    <property type="entry name" value="C-N_Hydrolase"/>
</dbReference>
<dbReference type="InterPro" id="IPR036526">
    <property type="entry name" value="C-N_Hydrolase_sf"/>
</dbReference>
<dbReference type="InterPro" id="IPR045378">
    <property type="entry name" value="LNT_N"/>
</dbReference>
<dbReference type="NCBIfam" id="TIGR00546">
    <property type="entry name" value="lnt"/>
    <property type="match status" value="1"/>
</dbReference>
<dbReference type="PANTHER" id="PTHR38686">
    <property type="entry name" value="APOLIPOPROTEIN N-ACYLTRANSFERASE"/>
    <property type="match status" value="1"/>
</dbReference>
<dbReference type="PANTHER" id="PTHR38686:SF1">
    <property type="entry name" value="APOLIPOPROTEIN N-ACYLTRANSFERASE"/>
    <property type="match status" value="1"/>
</dbReference>
<dbReference type="Pfam" id="PF00795">
    <property type="entry name" value="CN_hydrolase"/>
    <property type="match status" value="1"/>
</dbReference>
<dbReference type="Pfam" id="PF20154">
    <property type="entry name" value="LNT_N"/>
    <property type="match status" value="1"/>
</dbReference>
<dbReference type="SUPFAM" id="SSF56317">
    <property type="entry name" value="Carbon-nitrogen hydrolase"/>
    <property type="match status" value="1"/>
</dbReference>
<dbReference type="PROSITE" id="PS50263">
    <property type="entry name" value="CN_HYDROLASE"/>
    <property type="match status" value="1"/>
</dbReference>
<organism>
    <name type="scientific">Vibrio cholerae serotype O1 (strain ATCC 39315 / El Tor Inaba N16961)</name>
    <dbReference type="NCBI Taxonomy" id="243277"/>
    <lineage>
        <taxon>Bacteria</taxon>
        <taxon>Pseudomonadati</taxon>
        <taxon>Pseudomonadota</taxon>
        <taxon>Gammaproteobacteria</taxon>
        <taxon>Vibrionales</taxon>
        <taxon>Vibrionaceae</taxon>
        <taxon>Vibrio</taxon>
    </lineage>
</organism>